<dbReference type="EMBL" id="J02400">
    <property type="protein sequence ID" value="AAB59925.1"/>
    <property type="molecule type" value="Genomic_DNA"/>
</dbReference>
<dbReference type="PIR" id="C03631">
    <property type="entry name" value="TVVPA4"/>
</dbReference>
<dbReference type="RefSeq" id="NP_043128.1">
    <molecule id="P03081-1"/>
    <property type="nucleotide sequence ID" value="NC_001669.1"/>
</dbReference>
<dbReference type="RefSeq" id="YP_003708383.1">
    <property type="nucleotide sequence ID" value="NC_001669.1"/>
</dbReference>
<dbReference type="PDB" id="2PF4">
    <property type="method" value="X-ray"/>
    <property type="resolution" value="3.10 A"/>
    <property type="chains" value="E/F/G/H=1-174"/>
</dbReference>
<dbReference type="PDB" id="2PKG">
    <property type="method" value="X-ray"/>
    <property type="resolution" value="3.30 A"/>
    <property type="chains" value="C/D=87-174"/>
</dbReference>
<dbReference type="PDBsum" id="2PF4"/>
<dbReference type="PDBsum" id="2PKG"/>
<dbReference type="SMR" id="P03081"/>
<dbReference type="DIP" id="DIP-29393N"/>
<dbReference type="IntAct" id="P03081">
    <property type="interactions" value="3"/>
</dbReference>
<dbReference type="MINT" id="P03081"/>
<dbReference type="iPTMnet" id="P03081"/>
<dbReference type="GeneID" id="29031021"/>
<dbReference type="OrthoDB" id="14669at10239"/>
<dbReference type="EvolutionaryTrace" id="P03081"/>
<dbReference type="Proteomes" id="UP000007705">
    <property type="component" value="Genome"/>
</dbReference>
<dbReference type="GO" id="GO:0030430">
    <property type="term" value="C:host cell cytoplasm"/>
    <property type="evidence" value="ECO:0007669"/>
    <property type="project" value="UniProtKB-SubCell"/>
</dbReference>
<dbReference type="GO" id="GO:0042025">
    <property type="term" value="C:host cell nucleus"/>
    <property type="evidence" value="ECO:0007669"/>
    <property type="project" value="UniProtKB-SubCell"/>
</dbReference>
<dbReference type="GO" id="GO:0008270">
    <property type="term" value="F:zinc ion binding"/>
    <property type="evidence" value="ECO:0007669"/>
    <property type="project" value="UniProtKB-KW"/>
</dbReference>
<dbReference type="GO" id="GO:0039657">
    <property type="term" value="P:symbiont-mediated suppression of host gene expression"/>
    <property type="evidence" value="ECO:0007669"/>
    <property type="project" value="UniProtKB-KW"/>
</dbReference>
<dbReference type="CDD" id="cd06257">
    <property type="entry name" value="DnaJ"/>
    <property type="match status" value="1"/>
</dbReference>
<dbReference type="FunFam" id="1.10.287.110:FF:000161">
    <property type="entry name" value="Small t antigen"/>
    <property type="match status" value="1"/>
</dbReference>
<dbReference type="Gene3D" id="1.10.287.110">
    <property type="entry name" value="DnaJ domain"/>
    <property type="match status" value="1"/>
</dbReference>
<dbReference type="Gene3D" id="1.20.120.1860">
    <property type="entry name" value="Small t-antigen, unique domain"/>
    <property type="match status" value="1"/>
</dbReference>
<dbReference type="InterPro" id="IPR001623">
    <property type="entry name" value="DnaJ_domain"/>
</dbReference>
<dbReference type="InterPro" id="IPR036869">
    <property type="entry name" value="J_dom_sf"/>
</dbReference>
<dbReference type="InterPro" id="IPR003354">
    <property type="entry name" value="Papo_T_antigen"/>
</dbReference>
<dbReference type="InterPro" id="IPR036092">
    <property type="entry name" value="Papo_T_antigensf"/>
</dbReference>
<dbReference type="Pfam" id="PF02380">
    <property type="entry name" value="Papo_T_antigen"/>
    <property type="match status" value="1"/>
</dbReference>
<dbReference type="SMART" id="SM00271">
    <property type="entry name" value="DnaJ"/>
    <property type="match status" value="1"/>
</dbReference>
<dbReference type="SUPFAM" id="SSF46565">
    <property type="entry name" value="Chaperone J-domain"/>
    <property type="match status" value="1"/>
</dbReference>
<dbReference type="SUPFAM" id="SSF161240">
    <property type="entry name" value="T-antigen specific domain-like"/>
    <property type="match status" value="1"/>
</dbReference>
<dbReference type="PROSITE" id="PS50076">
    <property type="entry name" value="DNAJ_2"/>
    <property type="match status" value="1"/>
</dbReference>
<accession>P03081</accession>
<proteinExistence type="evidence at protein level"/>
<organism>
    <name type="scientific">Simian virus 40</name>
    <name type="common">SV40</name>
    <dbReference type="NCBI Taxonomy" id="1891767"/>
    <lineage>
        <taxon>Viruses</taxon>
        <taxon>Monodnaviria</taxon>
        <taxon>Shotokuvirae</taxon>
        <taxon>Cossaviricota</taxon>
        <taxon>Papovaviricetes</taxon>
        <taxon>Sepolyvirales</taxon>
        <taxon>Polyomaviridae</taxon>
        <taxon>Betapolyomavirus</taxon>
    </lineage>
</organism>
<name>ST_SV40</name>
<comment type="function">
    <text evidence="2 3 5 9 10">Promotes efficient viral genome replication by accelerating both G1 and S phase progression of the cell cycle. Inhibits host PP2A by binding to the A subunit, thereby displacing lower affinity regulatory B subunit. Inactivation of PP2A in turn results in the transactivation of cyclin A and cyclin D1 promoters. Late during the infection cycle, ST may induce dephosphorylation of host eIF4E-binding protein EIF4EBP1 leading to the inhibition of cap-dependent translation. May establish and maintain high levels of viral genomes during persistent infection in cell culture.</text>
</comment>
<comment type="subunit">
    <text evidence="4 8">Interacts with host PPP2R1A; the interaction inhibits PP2A activity.</text>
</comment>
<comment type="interaction">
    <interactant intactId="EBI-1266256">
        <id>P03081</id>
    </interactant>
    <interactant intactId="EBI-302388">
        <id>P30153</id>
        <label>PPP2R1A</label>
    </interactant>
    <organismsDiffer>true</organismsDiffer>
    <experiments>5</experiments>
</comment>
<comment type="subcellular location">
    <subcellularLocation>
        <location evidence="7">Host cytoplasm</location>
    </subcellularLocation>
    <subcellularLocation>
        <location evidence="7">Host nucleus</location>
    </subcellularLocation>
</comment>
<comment type="alternative products">
    <event type="alternative splicing"/>
    <event type="alternative initiation"/>
    <isoform>
        <id>P03081-1</id>
        <name>Small t antigen</name>
        <sequence type="displayed"/>
    </isoform>
    <isoform>
        <id>P03070-1</id>
        <name>Large T antigen</name>
        <sequence type="external"/>
    </isoform>
    <isoform>
        <id>P03070-2</id>
        <name>17kT antigen</name>
        <sequence type="external"/>
    </isoform>
    <isoform>
        <id>P0C6L2-1</id>
        <name>SELP</name>
        <sequence type="external"/>
    </isoform>
</comment>
<comment type="domain">
    <text evidence="11">The common region of SV40 ST, 17kT and LT proteins comprises the J domain. This domain is essential for multiple viral activities, including virion assembly, viral DNA replication, transformation and transcriptional activation. This domain is also required for cyclin A-transactivating activity of ST.</text>
</comment>
<comment type="miscellaneous">
    <molecule>Isoform Small t antigen</molecule>
    <text>Produced by alternative splicing.</text>
</comment>
<feature type="chain" id="PRO_0000115061" description="Small t antigen">
    <location>
        <begin position="1"/>
        <end position="174"/>
    </location>
</feature>
<feature type="domain" description="J" evidence="1">
    <location>
        <begin position="12"/>
        <end position="75"/>
    </location>
</feature>
<feature type="zinc finger region" description="C4-type; atypical">
    <location>
        <begin position="103"/>
        <end position="116"/>
    </location>
</feature>
<feature type="zinc finger region" description="H1C3-type; atypical">
    <location>
        <begin position="122"/>
        <end position="143"/>
    </location>
</feature>
<feature type="modified residue" description="N-acetylmethionine; by host" evidence="6">
    <location>
        <position position="1"/>
    </location>
</feature>
<feature type="turn" evidence="12">
    <location>
        <begin position="2"/>
        <end position="4"/>
    </location>
</feature>
<feature type="helix" evidence="12">
    <location>
        <begin position="7"/>
        <end position="15"/>
    </location>
</feature>
<feature type="turn" evidence="12">
    <location>
        <begin position="16"/>
        <end position="18"/>
    </location>
</feature>
<feature type="helix" evidence="12">
    <location>
        <begin position="21"/>
        <end position="23"/>
    </location>
</feature>
<feature type="helix" evidence="12">
    <location>
        <begin position="27"/>
        <end position="37"/>
    </location>
</feature>
<feature type="helix" evidence="12">
    <location>
        <begin position="38"/>
        <end position="40"/>
    </location>
</feature>
<feature type="turn" evidence="12">
    <location>
        <begin position="50"/>
        <end position="53"/>
    </location>
</feature>
<feature type="helix" evidence="12">
    <location>
        <begin position="54"/>
        <end position="69"/>
    </location>
</feature>
<feature type="helix" evidence="12">
    <location>
        <begin position="73"/>
        <end position="76"/>
    </location>
</feature>
<feature type="turn" evidence="13">
    <location>
        <begin position="94"/>
        <end position="96"/>
    </location>
</feature>
<feature type="helix" evidence="12">
    <location>
        <begin position="100"/>
        <end position="104"/>
    </location>
</feature>
<feature type="strand" evidence="13">
    <location>
        <begin position="108"/>
        <end position="110"/>
    </location>
</feature>
<feature type="helix" evidence="12">
    <location>
        <begin position="114"/>
        <end position="125"/>
    </location>
</feature>
<feature type="turn" evidence="12">
    <location>
        <begin position="126"/>
        <end position="128"/>
    </location>
</feature>
<feature type="turn" evidence="13">
    <location>
        <begin position="135"/>
        <end position="137"/>
    </location>
</feature>
<feature type="helix" evidence="12">
    <location>
        <begin position="141"/>
        <end position="147"/>
    </location>
</feature>
<feature type="helix" evidence="12">
    <location>
        <begin position="154"/>
        <end position="164"/>
    </location>
</feature>
<protein>
    <recommendedName>
        <fullName>Small t antigen</fullName>
        <shortName>ST</shortName>
        <shortName>ST-AG</shortName>
    </recommendedName>
</protein>
<keyword id="KW-0002">3D-structure</keyword>
<keyword id="KW-0007">Acetylation</keyword>
<keyword id="KW-0010">Activator</keyword>
<keyword id="KW-0024">Alternative initiation</keyword>
<keyword id="KW-0025">Alternative splicing</keyword>
<keyword id="KW-0244">Early protein</keyword>
<keyword id="KW-1262">Eukaryotic host gene expression shutoff by virus</keyword>
<keyword id="KW-1193">Eukaryotic host translation shutoff by virus</keyword>
<keyword id="KW-1035">Host cytoplasm</keyword>
<keyword id="KW-1190">Host gene expression shutoff by virus</keyword>
<keyword id="KW-1048">Host nucleus</keyword>
<keyword id="KW-0945">Host-virus interaction</keyword>
<keyword id="KW-0479">Metal-binding</keyword>
<keyword id="KW-0553">Oncogene</keyword>
<keyword id="KW-0597">Phosphoprotein</keyword>
<keyword id="KW-1185">Reference proteome</keyword>
<keyword id="KW-0804">Transcription</keyword>
<keyword id="KW-0805">Transcription regulation</keyword>
<keyword id="KW-0862">Zinc</keyword>
<keyword id="KW-0863">Zinc-finger</keyword>
<sequence>MDKVLNREESLQLMDLLGLERSAWGNIPLMRKAYLKKCKEFHPDKGGDEEKMKKMNTLYKKMEDGVKYAHQPDFGGFWDATEVFASSLNPGVDAMYCKQWPECAKKMSANCICLLCLLRMKHENRKLYRKDPLVWVDCYCFDCFRMWFGLDLCEGTLLLWCDIIGQTTYRDLKL</sequence>
<reference key="1">
    <citation type="journal article" date="1978" name="Science">
        <title>The genome of simian virus 40.</title>
        <authorList>
            <person name="Reddy V.B."/>
            <person name="Thimmappaya B."/>
            <person name="Dhar R."/>
            <person name="Subramanian K.N."/>
            <person name="Zain B.S."/>
            <person name="Pan J."/>
            <person name="Ghosh P.K."/>
            <person name="Celma M.L."/>
            <person name="Weissman S.M."/>
        </authorList>
    </citation>
    <scope>NUCLEOTIDE SEQUENCE [GENOMIC DNA]</scope>
</reference>
<reference key="2">
    <citation type="journal article" date="1978" name="Nature">
        <title>Complete nucleotide sequence of SV40 DNA.</title>
        <authorList>
            <person name="Fiers W."/>
            <person name="Contreras R."/>
            <person name="Haegeman G."/>
            <person name="Rogiers R."/>
            <person name="van de Voorde A."/>
            <person name="van Heuverswyn H."/>
            <person name="van Herreweghe J."/>
            <person name="Volckaert G."/>
            <person name="Ysebaert M."/>
        </authorList>
    </citation>
    <scope>NUCLEOTIDE SEQUENCE [GENOMIC DNA]</scope>
    <scope>ACETYLATION AT MET-1</scope>
    <source>
        <strain>776</strain>
    </source>
</reference>
<reference key="3">
    <citation type="journal article" date="1984" name="J. Virol.">
        <title>Localization of the simian virus 40 Small t antigen in the nucleus and cytoplasm of monkey and mouse cells.</title>
        <authorList>
            <person name="Ellman M."/>
            <person name="Bikel I."/>
            <person name="Figge J."/>
            <person name="Roberts T."/>
            <person name="Schlossman R."/>
            <person name="Livingston D.M."/>
        </authorList>
    </citation>
    <scope>SUBCELLULAR LOCATION</scope>
</reference>
<reference key="4">
    <citation type="journal article" date="1991" name="Mol. Cell. Biol.">
        <title>Dephosphorylation of simian virus 40 large-T antigen and p53 protein by protein phosphatase 2A: inhibition by small-t antigen.</title>
        <authorList>
            <person name="Scheidtmann K.H."/>
            <person name="Mumby M.C."/>
            <person name="Rundell K."/>
            <person name="Walter G."/>
        </authorList>
    </citation>
    <scope>INHIBITION OF HOST PP2A ACTIVITY</scope>
</reference>
<reference key="5">
    <citation type="journal article" date="1991" name="Mol. Cell. Biol.">
        <title>Control of protein phosphatase 2A by simian virus 40 small-t antigen.</title>
        <authorList>
            <person name="Yang S.-L."/>
            <person name="Lickteig R.L."/>
            <person name="Estes R."/>
            <person name="Rundell K."/>
            <person name="Walter G."/>
            <person name="Mumby M.C."/>
        </authorList>
    </citation>
    <scope>INTERACTION WITH HOST PP2A</scope>
</reference>
<reference key="6">
    <citation type="journal article" date="1994" name="J. Virol.">
        <title>Mutations which affect the inhibition of protein phosphatase 2A by simian virus 40 small-t antigen in vitro decrease viral transformation.</title>
        <authorList>
            <person name="Mungre S."/>
            <person name="Enderle K."/>
            <person name="Turk B."/>
            <person name="Porras A."/>
            <person name="Wu Y.Q."/>
            <person name="Mumby M.C."/>
            <person name="Rundell K."/>
        </authorList>
    </citation>
    <scope>INTERACTION WITH HOST PP2A</scope>
</reference>
<reference key="7">
    <citation type="journal article" date="1996" name="J. Virol.">
        <title>A novel simian virus 40 early-region domain mediates transactivation of the cyclin A promoter by small-t antigen and is required for transformation in small-t antigen-dependent assays.</title>
        <authorList>
            <person name="Porras A."/>
            <person name="Bennett J."/>
            <person name="Howe A."/>
            <person name="Tokos K."/>
            <person name="Bouck N."/>
            <person name="Henglein B."/>
            <person name="Sathyamangalam S."/>
            <person name="Thimmapaya B."/>
            <person name="Rundell K."/>
        </authorList>
    </citation>
    <scope>FUNCTION</scope>
</reference>
<reference key="8">
    <citation type="journal article" date="1996" name="Proc. Natl. Acad. Sci. U.S.A.">
        <title>Induction of cyclin D1 by simian virus 40 small tumor antigen.</title>
        <authorList>
            <person name="Watanabe G."/>
            <person name="Howe A."/>
            <person name="Lee R.J."/>
            <person name="Albanese C."/>
            <person name="Shu I.W."/>
            <person name="Karnezis A.N."/>
            <person name="Zon L."/>
            <person name="Kyriakis J."/>
            <person name="Rundell K."/>
            <person name="Pestell R.G."/>
        </authorList>
    </citation>
    <scope>FUNCTION</scope>
</reference>
<reference key="9">
    <citation type="journal article" date="1997" name="Proc. Natl. Acad. Sci. U.S.A.">
        <title>The T/t common exon of simian virus 40, JC, and BK polyomavirus T antigens can functionally replace the J-domain of the Escherichia coli DnaJ molecular chaperone.</title>
        <authorList>
            <person name="Kelley W.L."/>
            <person name="Georgopoulos C."/>
        </authorList>
    </citation>
    <scope>DOMAIN</scope>
</reference>
<reference key="10">
    <citation type="journal article" date="2005" name="J. Virol.">
        <title>Effects of simian virus 40 large and small tumor antigens on mammalian target of rapamycin signaling: small tumor antigen mediates hypophosphorylation of eIF4E-binding protein 1 late in infection.</title>
        <authorList>
            <person name="Yu Y."/>
            <person name="Kudchodkar S.B."/>
            <person name="Alwine J.C."/>
        </authorList>
    </citation>
    <scope>FUNCTION</scope>
</reference>
<reference key="11">
    <citation type="journal article" date="2005" name="Virology">
        <title>PP2A-dependent transactivation of the cyclin A promoter by SV40 ST is mediated by a cell cycle-regulated E2F site.</title>
        <authorList>
            <person name="Skoczylas C."/>
            <person name="Henglein B."/>
            <person name="Rundell K."/>
        </authorList>
    </citation>
    <scope>FUNCTION</scope>
</reference>
<reference key="12">
    <citation type="journal article" date="2008" name="Virology">
        <title>Role of SV40 ST antigen in the persistent infection of mesothelial cells.</title>
        <authorList>
            <person name="Fahrbach K.M."/>
            <person name="Katzman R.B."/>
            <person name="Rundell K."/>
        </authorList>
    </citation>
    <scope>FUNCTION</scope>
</reference>
<reference key="13">
    <citation type="journal article" date="2007" name="Nat. Struct. Mol. Biol.">
        <title>Structural and biochemical insights into the regulation of protein phosphatase 2A by small t antigen of SV40.</title>
        <authorList>
            <person name="Chen Y."/>
            <person name="Xu Y."/>
            <person name="Bao Q."/>
            <person name="Xing Y."/>
            <person name="Li Z."/>
            <person name="Lin Z."/>
            <person name="Stock J.B."/>
            <person name="Jeffrey P.D."/>
            <person name="Shi Y."/>
        </authorList>
    </citation>
    <scope>X-RAY CRYSTALLOGRAPHY (3.3 ANGSTROMS) OF 87-174</scope>
</reference>
<evidence type="ECO:0000255" key="1">
    <source>
        <dbReference type="PROSITE-ProRule" id="PRU00286"/>
    </source>
</evidence>
<evidence type="ECO:0000269" key="2">
    <source>
    </source>
</evidence>
<evidence type="ECO:0000269" key="3">
    <source>
    </source>
</evidence>
<evidence type="ECO:0000269" key="4">
    <source>
    </source>
</evidence>
<evidence type="ECO:0000269" key="5">
    <source>
    </source>
</evidence>
<evidence type="ECO:0000269" key="6">
    <source>
    </source>
</evidence>
<evidence type="ECO:0000269" key="7">
    <source>
    </source>
</evidence>
<evidence type="ECO:0000269" key="8">
    <source>
    </source>
</evidence>
<evidence type="ECO:0000269" key="9">
    <source>
    </source>
</evidence>
<evidence type="ECO:0000269" key="10">
    <source>
    </source>
</evidence>
<evidence type="ECO:0000269" key="11">
    <source>
    </source>
</evidence>
<evidence type="ECO:0007829" key="12">
    <source>
        <dbReference type="PDB" id="2PF4"/>
    </source>
</evidence>
<evidence type="ECO:0007829" key="13">
    <source>
        <dbReference type="PDB" id="2PKG"/>
    </source>
</evidence>
<organismHost>
    <name type="scientific">Macaca</name>
    <name type="common">macaques</name>
    <dbReference type="NCBI Taxonomy" id="9539"/>
</organismHost>